<keyword id="KW-0067">ATP-binding</keyword>
<keyword id="KW-0227">DNA damage</keyword>
<keyword id="KW-0234">DNA repair</keyword>
<keyword id="KW-0238">DNA-binding</keyword>
<keyword id="KW-0547">Nucleotide-binding</keyword>
<organism>
    <name type="scientific">Thermus thermophilus (strain ATCC BAA-163 / DSM 7039 / HB27)</name>
    <dbReference type="NCBI Taxonomy" id="262724"/>
    <lineage>
        <taxon>Bacteria</taxon>
        <taxon>Thermotogati</taxon>
        <taxon>Deinococcota</taxon>
        <taxon>Deinococci</taxon>
        <taxon>Thermales</taxon>
        <taxon>Thermaceae</taxon>
        <taxon>Thermus</taxon>
    </lineage>
</organism>
<dbReference type="EMBL" id="AE017221">
    <property type="protein sequence ID" value="AAS81302.1"/>
    <property type="molecule type" value="Genomic_DNA"/>
</dbReference>
<dbReference type="RefSeq" id="WP_011173381.1">
    <property type="nucleotide sequence ID" value="NC_005835.1"/>
</dbReference>
<dbReference type="SMR" id="P61671"/>
<dbReference type="KEGG" id="tth:TT_C0960"/>
<dbReference type="eggNOG" id="COG0249">
    <property type="taxonomic scope" value="Bacteria"/>
</dbReference>
<dbReference type="HOGENOM" id="CLU_002472_3_2_0"/>
<dbReference type="Proteomes" id="UP000000592">
    <property type="component" value="Chromosome"/>
</dbReference>
<dbReference type="GO" id="GO:0005524">
    <property type="term" value="F:ATP binding"/>
    <property type="evidence" value="ECO:0007669"/>
    <property type="project" value="UniProtKB-UniRule"/>
</dbReference>
<dbReference type="GO" id="GO:0140664">
    <property type="term" value="F:ATP-dependent DNA damage sensor activity"/>
    <property type="evidence" value="ECO:0007669"/>
    <property type="project" value="InterPro"/>
</dbReference>
<dbReference type="GO" id="GO:0003684">
    <property type="term" value="F:damaged DNA binding"/>
    <property type="evidence" value="ECO:0007669"/>
    <property type="project" value="UniProtKB-UniRule"/>
</dbReference>
<dbReference type="GO" id="GO:0030983">
    <property type="term" value="F:mismatched DNA binding"/>
    <property type="evidence" value="ECO:0007669"/>
    <property type="project" value="InterPro"/>
</dbReference>
<dbReference type="GO" id="GO:0006298">
    <property type="term" value="P:mismatch repair"/>
    <property type="evidence" value="ECO:0007669"/>
    <property type="project" value="UniProtKB-UniRule"/>
</dbReference>
<dbReference type="CDD" id="cd03284">
    <property type="entry name" value="ABC_MutS1"/>
    <property type="match status" value="1"/>
</dbReference>
<dbReference type="Gene3D" id="1.10.1420.10">
    <property type="match status" value="2"/>
</dbReference>
<dbReference type="Gene3D" id="6.10.140.430">
    <property type="match status" value="1"/>
</dbReference>
<dbReference type="Gene3D" id="3.40.1170.10">
    <property type="entry name" value="DNA repair protein MutS, domain I"/>
    <property type="match status" value="1"/>
</dbReference>
<dbReference type="Gene3D" id="3.30.420.110">
    <property type="entry name" value="MutS, connector domain"/>
    <property type="match status" value="1"/>
</dbReference>
<dbReference type="Gene3D" id="3.40.50.300">
    <property type="entry name" value="P-loop containing nucleotide triphosphate hydrolases"/>
    <property type="match status" value="1"/>
</dbReference>
<dbReference type="HAMAP" id="MF_00096">
    <property type="entry name" value="MutS"/>
    <property type="match status" value="1"/>
</dbReference>
<dbReference type="InterPro" id="IPR005748">
    <property type="entry name" value="DNA_mismatch_repair_MutS"/>
</dbReference>
<dbReference type="InterPro" id="IPR007695">
    <property type="entry name" value="DNA_mismatch_repair_MutS-lik_N"/>
</dbReference>
<dbReference type="InterPro" id="IPR017261">
    <property type="entry name" value="DNA_mismatch_repair_MutS/MSH"/>
</dbReference>
<dbReference type="InterPro" id="IPR000432">
    <property type="entry name" value="DNA_mismatch_repair_MutS_C"/>
</dbReference>
<dbReference type="InterPro" id="IPR007861">
    <property type="entry name" value="DNA_mismatch_repair_MutS_clamp"/>
</dbReference>
<dbReference type="InterPro" id="IPR007696">
    <property type="entry name" value="DNA_mismatch_repair_MutS_core"/>
</dbReference>
<dbReference type="InterPro" id="IPR016151">
    <property type="entry name" value="DNA_mismatch_repair_MutS_N"/>
</dbReference>
<dbReference type="InterPro" id="IPR036187">
    <property type="entry name" value="DNA_mismatch_repair_MutS_sf"/>
</dbReference>
<dbReference type="InterPro" id="IPR007860">
    <property type="entry name" value="DNA_mmatch_repair_MutS_con_dom"/>
</dbReference>
<dbReference type="InterPro" id="IPR045076">
    <property type="entry name" value="MutS"/>
</dbReference>
<dbReference type="InterPro" id="IPR036678">
    <property type="entry name" value="MutS_con_dom_sf"/>
</dbReference>
<dbReference type="InterPro" id="IPR027417">
    <property type="entry name" value="P-loop_NTPase"/>
</dbReference>
<dbReference type="NCBIfam" id="TIGR01070">
    <property type="entry name" value="mutS1"/>
    <property type="match status" value="1"/>
</dbReference>
<dbReference type="NCBIfam" id="NF003810">
    <property type="entry name" value="PRK05399.1"/>
    <property type="match status" value="1"/>
</dbReference>
<dbReference type="PANTHER" id="PTHR11361:SF34">
    <property type="entry name" value="DNA MISMATCH REPAIR PROTEIN MSH1, MITOCHONDRIAL"/>
    <property type="match status" value="1"/>
</dbReference>
<dbReference type="PANTHER" id="PTHR11361">
    <property type="entry name" value="DNA MISMATCH REPAIR PROTEIN MUTS FAMILY MEMBER"/>
    <property type="match status" value="1"/>
</dbReference>
<dbReference type="Pfam" id="PF01624">
    <property type="entry name" value="MutS_I"/>
    <property type="match status" value="1"/>
</dbReference>
<dbReference type="Pfam" id="PF05188">
    <property type="entry name" value="MutS_II"/>
    <property type="match status" value="1"/>
</dbReference>
<dbReference type="Pfam" id="PF05192">
    <property type="entry name" value="MutS_III"/>
    <property type="match status" value="1"/>
</dbReference>
<dbReference type="Pfam" id="PF05190">
    <property type="entry name" value="MutS_IV"/>
    <property type="match status" value="1"/>
</dbReference>
<dbReference type="Pfam" id="PF00488">
    <property type="entry name" value="MutS_V"/>
    <property type="match status" value="1"/>
</dbReference>
<dbReference type="PIRSF" id="PIRSF037677">
    <property type="entry name" value="DNA_mis_repair_Msh6"/>
    <property type="match status" value="1"/>
</dbReference>
<dbReference type="SMART" id="SM00534">
    <property type="entry name" value="MUTSac"/>
    <property type="match status" value="1"/>
</dbReference>
<dbReference type="SMART" id="SM00533">
    <property type="entry name" value="MUTSd"/>
    <property type="match status" value="1"/>
</dbReference>
<dbReference type="SUPFAM" id="SSF55271">
    <property type="entry name" value="DNA repair protein MutS, domain I"/>
    <property type="match status" value="1"/>
</dbReference>
<dbReference type="SUPFAM" id="SSF53150">
    <property type="entry name" value="DNA repair protein MutS, domain II"/>
    <property type="match status" value="1"/>
</dbReference>
<dbReference type="SUPFAM" id="SSF48334">
    <property type="entry name" value="DNA repair protein MutS, domain III"/>
    <property type="match status" value="1"/>
</dbReference>
<dbReference type="SUPFAM" id="SSF52540">
    <property type="entry name" value="P-loop containing nucleoside triphosphate hydrolases"/>
    <property type="match status" value="1"/>
</dbReference>
<dbReference type="PROSITE" id="PS00486">
    <property type="entry name" value="DNA_MISMATCH_REPAIR_2"/>
    <property type="match status" value="1"/>
</dbReference>
<protein>
    <recommendedName>
        <fullName evidence="1">DNA mismatch repair protein MutS</fullName>
    </recommendedName>
</protein>
<gene>
    <name evidence="1" type="primary">mutS</name>
    <name type="ordered locus">TT_C0960</name>
</gene>
<comment type="function">
    <text evidence="1">This protein is involved in the repair of mismatches in DNA. It is possible that it carries out the mismatch recognition step. This protein has a weak ATPase activity.</text>
</comment>
<comment type="similarity">
    <text evidence="1">Belongs to the DNA mismatch repair MutS family.</text>
</comment>
<feature type="chain" id="PRO_0000115159" description="DNA mismatch repair protein MutS">
    <location>
        <begin position="1"/>
        <end position="811"/>
    </location>
</feature>
<feature type="binding site" evidence="1">
    <location>
        <begin position="583"/>
        <end position="590"/>
    </location>
    <ligand>
        <name>ATP</name>
        <dbReference type="ChEBI" id="CHEBI:30616"/>
    </ligand>
</feature>
<proteinExistence type="inferred from homology"/>
<evidence type="ECO:0000255" key="1">
    <source>
        <dbReference type="HAMAP-Rule" id="MF_00096"/>
    </source>
</evidence>
<accession>P61671</accession>
<reference key="1">
    <citation type="journal article" date="2004" name="Nat. Biotechnol.">
        <title>The genome sequence of the extreme thermophile Thermus thermophilus.</title>
        <authorList>
            <person name="Henne A."/>
            <person name="Brueggemann H."/>
            <person name="Raasch C."/>
            <person name="Wiezer A."/>
            <person name="Hartsch T."/>
            <person name="Liesegang H."/>
            <person name="Johann A."/>
            <person name="Lienard T."/>
            <person name="Gohl O."/>
            <person name="Martinez-Arias R."/>
            <person name="Jacobi C."/>
            <person name="Starkuviene V."/>
            <person name="Schlenczeck S."/>
            <person name="Dencker S."/>
            <person name="Huber R."/>
            <person name="Klenk H.-P."/>
            <person name="Kramer W."/>
            <person name="Merkl R."/>
            <person name="Gottschalk G."/>
            <person name="Fritz H.-J."/>
        </authorList>
    </citation>
    <scope>NUCLEOTIDE SEQUENCE [LARGE SCALE GENOMIC DNA]</scope>
    <source>
        <strain>ATCC BAA-163 / DSM 7039 / HB27</strain>
    </source>
</reference>
<name>MUTS_THET2</name>
<sequence length="811" mass="90616">MGNMLKGEGPGPLPPLLQQYVELRDRYPDYLLLFQVGDFYECFGEDAERLARALGLVLTHKTSKDFTTPMAGIPIRAFDAYAERLLKMGFRLAVADQVEPAEEAEGLVRREVTQLLTPGTLTQEALLPREANYLAAIATGDGWGLAFLDVSTGEFKGTLLKSKSALYDELFRHRPAEVLLAPELRENEAFVAEFRKRFPVMLSEAPFEPQGEGPLALRRAQGALLAYARATQGGALSVRPFRLYDPGAFVRLPEASLKALEVFEPLRGQDTLFGVLDETRTAPGRRLLQAWLRHPLLERGPLEARLDRVERFVREGALREGVRRLLFRLADLERLATRLELSRASPRDLAALRRSLEILPELKGLLGEEVGLPDLSGLLEELRAALVEDPPLKVSEGGLIREGYDPDLDALRRAHAEGVAYFLDLEAREKERTGIPTLKVGYNAVFGYYLEVTRPYYEKVPQEYRPVQTLKDRQRYTLPEMKERERELYRLEALIKRREEEVFLALRERARKEAEALREAARILAELDVYAALAEVAVRHGYTRPRFGERLRIRAGRHPVVERRTAFVPNDLEMAHELVLVTGPNMAGKSTFLRQTALIALLAQIGSFVPAEEAELPLFDGIYTRIGASDDLAGGKSTFMVEMEEVALVLKEATERSLVLLDEVGRGTSSLDGVAIATALAEALHERRCYTLFATHYFELTALALPRLKNLHVAAKEEEGGLVFYHQVLPGPASKSYGVEVAEMAGLPKEVVERARALLSAMAARREGALEEVLERLLALDPDRLTPLEALRFLHELKALALGLPLGSMKG</sequence>